<proteinExistence type="inferred from homology"/>
<keyword id="KW-0067">ATP-binding</keyword>
<keyword id="KW-0227">DNA damage</keyword>
<keyword id="KW-0234">DNA repair</keyword>
<keyword id="KW-0238">DNA-binding</keyword>
<keyword id="KW-0547">Nucleotide-binding</keyword>
<sequence>MSEPTFKMTPMFEHYMSIKADYPDALLFYRMGDFYELFFDDAELAARELQITLTSRSRDPNNPIPMCGVPWHAVDTYVAQLVDKGYHIAICDQVEDPKTSKGLVKRAVTSVKTPGTVLDDANLSTKSHNYLGALCPGSDAEKGGFAWLDVSTGQWSGVDFRRQTELWQWVLKMAPRELLVPEGFQPPARTLLEGIRLVRLPLSRFDLKRSTERVLAAQGVREAAALGLEGREEIMRACGALLAYLAQTQMRSPEHLQPFLRLDLSRRLIIDEVTERNLEIFTRLNGRKGKGTLRHVLDETMTPMGGRLLEDMLRHPWREISPIVRIQDAVEWFYVDDGRRTALREALNGVYDMERLSTRISLNQGSPRDFIALRNSLAALPQVFTALIEPTTSLLLRPDQEKDASENTSQENGLTQPRALTELLKTWDAMEDCAQLLQSALVDNPPPVITDGGLFKSGYNAELDRLLDLAEHGEQKLQAMLAEEQSTTGIAKLKLGYNRVFGYYFEVSRAAHSGTVPYHFIRRQSLANAERFTTEALKNLEEELLSASDKRKALEYTLFQDLRQHMADQRERIAHMAQLIAHLDYWQSLAQVGRLNNWCRPGLETDGNLTIREGRHPVVEAMIGRANFVPNDFRLDEKRRLCLLTGPNMAGKSTVLRQVAIICLLAQMGSMVPATSARLGLVDRLFSRVGASDNLAQGQSTFMVEMMETARILRQATKRSLIILDEIGRGTSTYDGVALAWAMVEDLSRRAQGELRTLFATHYHELTALEGRVDGVFTMNIAISEYSGDILFLHKLVPGPADRSYGVEVARLAGVPGPVVQRARAILANLERGRDVARKAVVSAVCLPGIDLPETGPEEDMPVLQAAPPRSEHPVIELLRQIEPEELSPLDALKTLMEWKKLWSAQPGSAEQGESPDKHDEGKNSRG</sequence>
<feature type="chain" id="PRO_1000118680" description="DNA mismatch repair protein MutS">
    <location>
        <begin position="1"/>
        <end position="927"/>
    </location>
</feature>
<feature type="region of interest" description="Disordered" evidence="2">
    <location>
        <begin position="904"/>
        <end position="927"/>
    </location>
</feature>
<feature type="compositionally biased region" description="Basic and acidic residues" evidence="2">
    <location>
        <begin position="915"/>
        <end position="927"/>
    </location>
</feature>
<feature type="binding site" evidence="1">
    <location>
        <begin position="646"/>
        <end position="653"/>
    </location>
    <ligand>
        <name>ATP</name>
        <dbReference type="ChEBI" id="CHEBI:30616"/>
    </ligand>
</feature>
<gene>
    <name evidence="1" type="primary">mutS</name>
    <name type="ordered locus">Ddes_1181</name>
</gene>
<accession>B8J008</accession>
<comment type="function">
    <text evidence="1">This protein is involved in the repair of mismatches in DNA. It is possible that it carries out the mismatch recognition step. This protein has a weak ATPase activity.</text>
</comment>
<comment type="similarity">
    <text evidence="1">Belongs to the DNA mismatch repair MutS family.</text>
</comment>
<organism>
    <name type="scientific">Desulfovibrio desulfuricans (strain ATCC 27774 / DSM 6949 / MB)</name>
    <dbReference type="NCBI Taxonomy" id="525146"/>
    <lineage>
        <taxon>Bacteria</taxon>
        <taxon>Pseudomonadati</taxon>
        <taxon>Thermodesulfobacteriota</taxon>
        <taxon>Desulfovibrionia</taxon>
        <taxon>Desulfovibrionales</taxon>
        <taxon>Desulfovibrionaceae</taxon>
        <taxon>Desulfovibrio</taxon>
    </lineage>
</organism>
<protein>
    <recommendedName>
        <fullName evidence="1">DNA mismatch repair protein MutS</fullName>
    </recommendedName>
</protein>
<evidence type="ECO:0000255" key="1">
    <source>
        <dbReference type="HAMAP-Rule" id="MF_00096"/>
    </source>
</evidence>
<evidence type="ECO:0000256" key="2">
    <source>
        <dbReference type="SAM" id="MobiDB-lite"/>
    </source>
</evidence>
<reference key="1">
    <citation type="submission" date="2009-01" db="EMBL/GenBank/DDBJ databases">
        <title>Complete sequence of Desulfovibrio desulfuricans subsp. desulfuricans str. ATCC 27774.</title>
        <authorList>
            <consortium name="US DOE Joint Genome Institute"/>
            <person name="Lucas S."/>
            <person name="Copeland A."/>
            <person name="Lapidus A."/>
            <person name="Glavina del Rio T."/>
            <person name="Tice H."/>
            <person name="Bruce D."/>
            <person name="Goodwin L."/>
            <person name="Pitluck S."/>
            <person name="Sims D."/>
            <person name="Lu M."/>
            <person name="Kiss H."/>
            <person name="Meineke L."/>
            <person name="Brettin T."/>
            <person name="Detter J.C."/>
            <person name="Han C."/>
            <person name="Larimer F."/>
            <person name="Land M."/>
            <person name="Hauser L."/>
            <person name="Kyrpides N."/>
            <person name="Ovchinnikova G."/>
            <person name="Hazen T.C."/>
        </authorList>
    </citation>
    <scope>NUCLEOTIDE SEQUENCE [LARGE SCALE GENOMIC DNA]</scope>
    <source>
        <strain>ATCC 27774 / DSM 6949 / MB</strain>
    </source>
</reference>
<dbReference type="EMBL" id="CP001358">
    <property type="protein sequence ID" value="ACL49085.1"/>
    <property type="molecule type" value="Genomic_DNA"/>
</dbReference>
<dbReference type="SMR" id="B8J008"/>
<dbReference type="STRING" id="525146.Ddes_1181"/>
<dbReference type="KEGG" id="dds:Ddes_1181"/>
<dbReference type="eggNOG" id="COG0249">
    <property type="taxonomic scope" value="Bacteria"/>
</dbReference>
<dbReference type="HOGENOM" id="CLU_002472_3_1_7"/>
<dbReference type="GO" id="GO:0005829">
    <property type="term" value="C:cytosol"/>
    <property type="evidence" value="ECO:0007669"/>
    <property type="project" value="TreeGrafter"/>
</dbReference>
<dbReference type="GO" id="GO:0005524">
    <property type="term" value="F:ATP binding"/>
    <property type="evidence" value="ECO:0007669"/>
    <property type="project" value="UniProtKB-UniRule"/>
</dbReference>
<dbReference type="GO" id="GO:0140664">
    <property type="term" value="F:ATP-dependent DNA damage sensor activity"/>
    <property type="evidence" value="ECO:0007669"/>
    <property type="project" value="InterPro"/>
</dbReference>
<dbReference type="GO" id="GO:0003684">
    <property type="term" value="F:damaged DNA binding"/>
    <property type="evidence" value="ECO:0007669"/>
    <property type="project" value="UniProtKB-UniRule"/>
</dbReference>
<dbReference type="GO" id="GO:0030983">
    <property type="term" value="F:mismatched DNA binding"/>
    <property type="evidence" value="ECO:0007669"/>
    <property type="project" value="InterPro"/>
</dbReference>
<dbReference type="GO" id="GO:0006298">
    <property type="term" value="P:mismatch repair"/>
    <property type="evidence" value="ECO:0007669"/>
    <property type="project" value="UniProtKB-UniRule"/>
</dbReference>
<dbReference type="CDD" id="cd03284">
    <property type="entry name" value="ABC_MutS1"/>
    <property type="match status" value="1"/>
</dbReference>
<dbReference type="FunFam" id="3.40.1170.10:FF:000001">
    <property type="entry name" value="DNA mismatch repair protein MutS"/>
    <property type="match status" value="1"/>
</dbReference>
<dbReference type="FunFam" id="3.40.50.300:FF:000870">
    <property type="entry name" value="MutS protein homolog 4"/>
    <property type="match status" value="1"/>
</dbReference>
<dbReference type="Gene3D" id="1.10.1420.10">
    <property type="match status" value="2"/>
</dbReference>
<dbReference type="Gene3D" id="6.10.140.430">
    <property type="match status" value="1"/>
</dbReference>
<dbReference type="Gene3D" id="3.40.1170.10">
    <property type="entry name" value="DNA repair protein MutS, domain I"/>
    <property type="match status" value="1"/>
</dbReference>
<dbReference type="Gene3D" id="3.30.420.110">
    <property type="entry name" value="MutS, connector domain"/>
    <property type="match status" value="1"/>
</dbReference>
<dbReference type="Gene3D" id="3.40.50.300">
    <property type="entry name" value="P-loop containing nucleotide triphosphate hydrolases"/>
    <property type="match status" value="1"/>
</dbReference>
<dbReference type="HAMAP" id="MF_00096">
    <property type="entry name" value="MutS"/>
    <property type="match status" value="1"/>
</dbReference>
<dbReference type="InterPro" id="IPR005748">
    <property type="entry name" value="DNA_mismatch_repair_MutS"/>
</dbReference>
<dbReference type="InterPro" id="IPR007695">
    <property type="entry name" value="DNA_mismatch_repair_MutS-lik_N"/>
</dbReference>
<dbReference type="InterPro" id="IPR017261">
    <property type="entry name" value="DNA_mismatch_repair_MutS/MSH"/>
</dbReference>
<dbReference type="InterPro" id="IPR000432">
    <property type="entry name" value="DNA_mismatch_repair_MutS_C"/>
</dbReference>
<dbReference type="InterPro" id="IPR007861">
    <property type="entry name" value="DNA_mismatch_repair_MutS_clamp"/>
</dbReference>
<dbReference type="InterPro" id="IPR007696">
    <property type="entry name" value="DNA_mismatch_repair_MutS_core"/>
</dbReference>
<dbReference type="InterPro" id="IPR016151">
    <property type="entry name" value="DNA_mismatch_repair_MutS_N"/>
</dbReference>
<dbReference type="InterPro" id="IPR036187">
    <property type="entry name" value="DNA_mismatch_repair_MutS_sf"/>
</dbReference>
<dbReference type="InterPro" id="IPR007860">
    <property type="entry name" value="DNA_mmatch_repair_MutS_con_dom"/>
</dbReference>
<dbReference type="InterPro" id="IPR045076">
    <property type="entry name" value="MutS"/>
</dbReference>
<dbReference type="InterPro" id="IPR036678">
    <property type="entry name" value="MutS_con_dom_sf"/>
</dbReference>
<dbReference type="InterPro" id="IPR027417">
    <property type="entry name" value="P-loop_NTPase"/>
</dbReference>
<dbReference type="NCBIfam" id="TIGR01070">
    <property type="entry name" value="mutS1"/>
    <property type="match status" value="1"/>
</dbReference>
<dbReference type="NCBIfam" id="NF003810">
    <property type="entry name" value="PRK05399.1"/>
    <property type="match status" value="1"/>
</dbReference>
<dbReference type="PANTHER" id="PTHR11361:SF34">
    <property type="entry name" value="DNA MISMATCH REPAIR PROTEIN MSH1, MITOCHONDRIAL"/>
    <property type="match status" value="1"/>
</dbReference>
<dbReference type="PANTHER" id="PTHR11361">
    <property type="entry name" value="DNA MISMATCH REPAIR PROTEIN MUTS FAMILY MEMBER"/>
    <property type="match status" value="1"/>
</dbReference>
<dbReference type="Pfam" id="PF01624">
    <property type="entry name" value="MutS_I"/>
    <property type="match status" value="1"/>
</dbReference>
<dbReference type="Pfam" id="PF05188">
    <property type="entry name" value="MutS_II"/>
    <property type="match status" value="1"/>
</dbReference>
<dbReference type="Pfam" id="PF05192">
    <property type="entry name" value="MutS_III"/>
    <property type="match status" value="1"/>
</dbReference>
<dbReference type="Pfam" id="PF05190">
    <property type="entry name" value="MutS_IV"/>
    <property type="match status" value="1"/>
</dbReference>
<dbReference type="Pfam" id="PF00488">
    <property type="entry name" value="MutS_V"/>
    <property type="match status" value="1"/>
</dbReference>
<dbReference type="PIRSF" id="PIRSF037677">
    <property type="entry name" value="DNA_mis_repair_Msh6"/>
    <property type="match status" value="1"/>
</dbReference>
<dbReference type="SMART" id="SM00534">
    <property type="entry name" value="MUTSac"/>
    <property type="match status" value="1"/>
</dbReference>
<dbReference type="SMART" id="SM00533">
    <property type="entry name" value="MUTSd"/>
    <property type="match status" value="1"/>
</dbReference>
<dbReference type="SUPFAM" id="SSF55271">
    <property type="entry name" value="DNA repair protein MutS, domain I"/>
    <property type="match status" value="1"/>
</dbReference>
<dbReference type="SUPFAM" id="SSF53150">
    <property type="entry name" value="DNA repair protein MutS, domain II"/>
    <property type="match status" value="1"/>
</dbReference>
<dbReference type="SUPFAM" id="SSF48334">
    <property type="entry name" value="DNA repair protein MutS, domain III"/>
    <property type="match status" value="1"/>
</dbReference>
<dbReference type="SUPFAM" id="SSF52540">
    <property type="entry name" value="P-loop containing nucleoside triphosphate hydrolases"/>
    <property type="match status" value="1"/>
</dbReference>
<dbReference type="PROSITE" id="PS00486">
    <property type="entry name" value="DNA_MISMATCH_REPAIR_2"/>
    <property type="match status" value="1"/>
</dbReference>
<name>MUTS_DESDA</name>